<reference key="1">
    <citation type="journal article" date="2009" name="PLoS Pathog.">
        <title>Molecular evolutionary consequences of niche restriction in Francisella tularensis, a facultative intracellular pathogen.</title>
        <authorList>
            <person name="Larsson P."/>
            <person name="Elfsmark D."/>
            <person name="Svensson K."/>
            <person name="Wikstroem P."/>
            <person name="Forsman M."/>
            <person name="Brettin T."/>
            <person name="Keim P."/>
            <person name="Johansson A."/>
        </authorList>
    </citation>
    <scope>NUCLEOTIDE SEQUENCE [LARGE SCALE GENOMIC DNA]</scope>
    <source>
        <strain>FSC147</strain>
    </source>
</reference>
<comment type="function">
    <text evidence="1">Forms part of the ribosomal stalk which helps the ribosome interact with GTP-bound translation factors. Is thus essential for accurate translation.</text>
</comment>
<comment type="subunit">
    <text evidence="1">Homodimer. Part of the ribosomal stalk of the 50S ribosomal subunit. Forms a multimeric L10(L12)X complex, where L10 forms an elongated spine to which 2 to 4 L12 dimers bind in a sequential fashion. Binds GTP-bound translation factors.</text>
</comment>
<comment type="similarity">
    <text evidence="1">Belongs to the bacterial ribosomal protein bL12 family.</text>
</comment>
<dbReference type="EMBL" id="CP000915">
    <property type="protein sequence ID" value="ACD30288.1"/>
    <property type="molecule type" value="Genomic_DNA"/>
</dbReference>
<dbReference type="SMR" id="B2SFD5"/>
<dbReference type="KEGG" id="ftm:FTM_0208"/>
<dbReference type="HOGENOM" id="CLU_086499_3_2_6"/>
<dbReference type="GO" id="GO:0022625">
    <property type="term" value="C:cytosolic large ribosomal subunit"/>
    <property type="evidence" value="ECO:0007669"/>
    <property type="project" value="TreeGrafter"/>
</dbReference>
<dbReference type="GO" id="GO:0003729">
    <property type="term" value="F:mRNA binding"/>
    <property type="evidence" value="ECO:0007669"/>
    <property type="project" value="TreeGrafter"/>
</dbReference>
<dbReference type="GO" id="GO:0003735">
    <property type="term" value="F:structural constituent of ribosome"/>
    <property type="evidence" value="ECO:0007669"/>
    <property type="project" value="InterPro"/>
</dbReference>
<dbReference type="GO" id="GO:0006412">
    <property type="term" value="P:translation"/>
    <property type="evidence" value="ECO:0007669"/>
    <property type="project" value="UniProtKB-UniRule"/>
</dbReference>
<dbReference type="CDD" id="cd00387">
    <property type="entry name" value="Ribosomal_L7_L12"/>
    <property type="match status" value="1"/>
</dbReference>
<dbReference type="FunFam" id="3.30.1390.10:FF:000001">
    <property type="entry name" value="50S ribosomal protein L7/L12"/>
    <property type="match status" value="1"/>
</dbReference>
<dbReference type="Gene3D" id="3.30.1390.10">
    <property type="match status" value="1"/>
</dbReference>
<dbReference type="Gene3D" id="1.20.5.710">
    <property type="entry name" value="Single helix bin"/>
    <property type="match status" value="1"/>
</dbReference>
<dbReference type="HAMAP" id="MF_00368">
    <property type="entry name" value="Ribosomal_bL12"/>
    <property type="match status" value="1"/>
</dbReference>
<dbReference type="InterPro" id="IPR000206">
    <property type="entry name" value="Ribosomal_bL12"/>
</dbReference>
<dbReference type="InterPro" id="IPR013823">
    <property type="entry name" value="Ribosomal_bL12_C"/>
</dbReference>
<dbReference type="InterPro" id="IPR014719">
    <property type="entry name" value="Ribosomal_bL12_C/ClpS-like"/>
</dbReference>
<dbReference type="InterPro" id="IPR008932">
    <property type="entry name" value="Ribosomal_bL12_oligo"/>
</dbReference>
<dbReference type="InterPro" id="IPR036235">
    <property type="entry name" value="Ribosomal_bL12_oligo_N_sf"/>
</dbReference>
<dbReference type="NCBIfam" id="TIGR00855">
    <property type="entry name" value="L12"/>
    <property type="match status" value="1"/>
</dbReference>
<dbReference type="PANTHER" id="PTHR45987">
    <property type="entry name" value="39S RIBOSOMAL PROTEIN L12"/>
    <property type="match status" value="1"/>
</dbReference>
<dbReference type="PANTHER" id="PTHR45987:SF4">
    <property type="entry name" value="LARGE RIBOSOMAL SUBUNIT PROTEIN BL12M"/>
    <property type="match status" value="1"/>
</dbReference>
<dbReference type="Pfam" id="PF00542">
    <property type="entry name" value="Ribosomal_L12"/>
    <property type="match status" value="1"/>
</dbReference>
<dbReference type="Pfam" id="PF16320">
    <property type="entry name" value="Ribosomal_L12_N"/>
    <property type="match status" value="1"/>
</dbReference>
<dbReference type="SUPFAM" id="SSF54736">
    <property type="entry name" value="ClpS-like"/>
    <property type="match status" value="1"/>
</dbReference>
<dbReference type="SUPFAM" id="SSF48300">
    <property type="entry name" value="Ribosomal protein L7/12, oligomerisation (N-terminal) domain"/>
    <property type="match status" value="1"/>
</dbReference>
<accession>B2SFD5</accession>
<evidence type="ECO:0000255" key="1">
    <source>
        <dbReference type="HAMAP-Rule" id="MF_00368"/>
    </source>
</evidence>
<evidence type="ECO:0000305" key="2"/>
<sequence>MAITKEDILNAVAEMSVMDVCDLVKMMEDKFGVSAAAATVAVAAGPVAGPAEAAEEKTEFDVVLVDAGSNKIAAIKAVRGATGLGLKEAKDAVEGTPFTVKEAASKEEAEALKKQLEEAGAKVELK</sequence>
<gene>
    <name evidence="1" type="primary">rplL</name>
    <name type="ordered locus">FTM_0208</name>
</gene>
<feature type="chain" id="PRO_1000121442" description="Large ribosomal subunit protein bL12">
    <location>
        <begin position="1"/>
        <end position="126"/>
    </location>
</feature>
<name>RL7_FRATM</name>
<organism>
    <name type="scientific">Francisella tularensis subsp. mediasiatica (strain FSC147)</name>
    <dbReference type="NCBI Taxonomy" id="441952"/>
    <lineage>
        <taxon>Bacteria</taxon>
        <taxon>Pseudomonadati</taxon>
        <taxon>Pseudomonadota</taxon>
        <taxon>Gammaproteobacteria</taxon>
        <taxon>Thiotrichales</taxon>
        <taxon>Francisellaceae</taxon>
        <taxon>Francisella</taxon>
    </lineage>
</organism>
<protein>
    <recommendedName>
        <fullName evidence="1">Large ribosomal subunit protein bL12</fullName>
    </recommendedName>
    <alternativeName>
        <fullName evidence="2">50S ribosomal protein L7/L12</fullName>
    </alternativeName>
</protein>
<keyword id="KW-0687">Ribonucleoprotein</keyword>
<keyword id="KW-0689">Ribosomal protein</keyword>
<proteinExistence type="inferred from homology"/>